<sequence>MIIPNLPFNLPFNLPFNLPFNLPSILPSILVPLVGLLLPAITMVLSHLYIQNDEIL</sequence>
<dbReference type="EMBL" id="AY228468">
    <property type="protein sequence ID" value="AAO74039.1"/>
    <property type="molecule type" value="Genomic_DNA"/>
</dbReference>
<dbReference type="RefSeq" id="NP_817191.1">
    <property type="nucleotide sequence ID" value="NC_004677.2"/>
</dbReference>
<dbReference type="SMR" id="Q85X26"/>
<dbReference type="GeneID" id="806922"/>
<dbReference type="GO" id="GO:0009535">
    <property type="term" value="C:chloroplast thylakoid membrane"/>
    <property type="evidence" value="ECO:0007669"/>
    <property type="project" value="UniProtKB-SubCell"/>
</dbReference>
<dbReference type="GO" id="GO:0009522">
    <property type="term" value="C:photosystem I"/>
    <property type="evidence" value="ECO:0007669"/>
    <property type="project" value="UniProtKB-KW"/>
</dbReference>
<dbReference type="GO" id="GO:0015979">
    <property type="term" value="P:photosynthesis"/>
    <property type="evidence" value="ECO:0007669"/>
    <property type="project" value="UniProtKB-UniRule"/>
</dbReference>
<dbReference type="HAMAP" id="MF_00431">
    <property type="entry name" value="PSI_PsaI"/>
    <property type="match status" value="1"/>
</dbReference>
<dbReference type="InterPro" id="IPR001302">
    <property type="entry name" value="PSI_PsaI"/>
</dbReference>
<dbReference type="InterPro" id="IPR036357">
    <property type="entry name" value="PSI_PsaI_sf"/>
</dbReference>
<dbReference type="NCBIfam" id="TIGR03052">
    <property type="entry name" value="PS_I_psaI"/>
    <property type="match status" value="1"/>
</dbReference>
<dbReference type="Pfam" id="PF00796">
    <property type="entry name" value="PSI_8"/>
    <property type="match status" value="1"/>
</dbReference>
<dbReference type="SUPFAM" id="SSF81540">
    <property type="entry name" value="Subunit VIII of photosystem I reaction centre, PsaI"/>
    <property type="match status" value="1"/>
</dbReference>
<evidence type="ECO:0000250" key="1"/>
<evidence type="ECO:0000255" key="2"/>
<evidence type="ECO:0000305" key="3"/>
<proteinExistence type="inferred from homology"/>
<comment type="function">
    <text evidence="1">May help in the organization of the PsaL subunit.</text>
</comment>
<comment type="subcellular location">
    <subcellularLocation>
        <location evidence="1">Plastid</location>
        <location evidence="1">Chloroplast thylakoid membrane</location>
        <topology evidence="1">Single-pass membrane protein</topology>
    </subcellularLocation>
</comment>
<comment type="similarity">
    <text evidence="3">Belongs to the PsaI family.</text>
</comment>
<keyword id="KW-0150">Chloroplast</keyword>
<keyword id="KW-0472">Membrane</keyword>
<keyword id="KW-0602">Photosynthesis</keyword>
<keyword id="KW-0603">Photosystem I</keyword>
<keyword id="KW-0934">Plastid</keyword>
<keyword id="KW-0793">Thylakoid</keyword>
<keyword id="KW-0812">Transmembrane</keyword>
<keyword id="KW-1133">Transmembrane helix</keyword>
<geneLocation type="chloroplast"/>
<reference key="1">
    <citation type="submission" date="2003-02" db="EMBL/GenBank/DDBJ databases">
        <title>Complete nucleotide sequence of Pinus koraiensis.</title>
        <authorList>
            <person name="Noh E.W."/>
            <person name="Lee J.S."/>
            <person name="Choi Y.I."/>
            <person name="Han M.S."/>
            <person name="Yi Y.S."/>
            <person name="Han S.U."/>
        </authorList>
    </citation>
    <scope>NUCLEOTIDE SEQUENCE [LARGE SCALE GENOMIC DNA]</scope>
    <source>
        <strain>KangWon16</strain>
    </source>
</reference>
<accession>Q85X26</accession>
<gene>
    <name type="primary">psaI</name>
</gene>
<name>PSAI_PINKO</name>
<feature type="chain" id="PRO_0000194670" description="Photosystem I reaction center subunit VIII">
    <location>
        <begin position="1"/>
        <end position="56"/>
    </location>
</feature>
<feature type="transmembrane region" description="Helical" evidence="2">
    <location>
        <begin position="28"/>
        <end position="50"/>
    </location>
</feature>
<organism>
    <name type="scientific">Pinus koraiensis</name>
    <name type="common">Korean pine</name>
    <dbReference type="NCBI Taxonomy" id="88728"/>
    <lineage>
        <taxon>Eukaryota</taxon>
        <taxon>Viridiplantae</taxon>
        <taxon>Streptophyta</taxon>
        <taxon>Embryophyta</taxon>
        <taxon>Tracheophyta</taxon>
        <taxon>Spermatophyta</taxon>
        <taxon>Pinopsida</taxon>
        <taxon>Pinidae</taxon>
        <taxon>Conifers I</taxon>
        <taxon>Pinales</taxon>
        <taxon>Pinaceae</taxon>
        <taxon>Pinus</taxon>
        <taxon>Pinus subgen. Strobus</taxon>
    </lineage>
</organism>
<protein>
    <recommendedName>
        <fullName>Photosystem I reaction center subunit VIII</fullName>
        <shortName>PSI-I</shortName>
    </recommendedName>
</protein>